<name>PYRI_PYRAR</name>
<organism>
    <name type="scientific">Pyrobaculum arsenaticum (strain DSM 13514 / JCM 11321 / PZ6)</name>
    <dbReference type="NCBI Taxonomy" id="340102"/>
    <lineage>
        <taxon>Archaea</taxon>
        <taxon>Thermoproteota</taxon>
        <taxon>Thermoprotei</taxon>
        <taxon>Thermoproteales</taxon>
        <taxon>Thermoproteaceae</taxon>
        <taxon>Pyrobaculum</taxon>
    </lineage>
</organism>
<proteinExistence type="inferred from homology"/>
<gene>
    <name evidence="1" type="primary">pyrI</name>
    <name type="ordered locus">Pars_1694</name>
</gene>
<comment type="function">
    <text evidence="1">Involved in allosteric regulation of aspartate carbamoyltransferase.</text>
</comment>
<comment type="cofactor">
    <cofactor evidence="1">
        <name>Zn(2+)</name>
        <dbReference type="ChEBI" id="CHEBI:29105"/>
    </cofactor>
    <text evidence="1">Binds 1 zinc ion per subunit.</text>
</comment>
<comment type="subunit">
    <text evidence="1">Contains catalytic and regulatory chains.</text>
</comment>
<comment type="similarity">
    <text evidence="1">Belongs to the PyrI family.</text>
</comment>
<keyword id="KW-0479">Metal-binding</keyword>
<keyword id="KW-0665">Pyrimidine biosynthesis</keyword>
<keyword id="KW-0862">Zinc</keyword>
<sequence>MSKELIVSKIENGTVIDHIPAGRALAVLRVLGITGKEGARVALVMNVESKKLGRKDIVKIEGRELTPEEVNIISAVAPTATINIIRNFEVVRKFNVTPPEVIRGRFKCKNPTCITNAPREPVEPTFYLVRREPPLFVCAYCGRYHELGDLV</sequence>
<dbReference type="EMBL" id="CP000660">
    <property type="protein sequence ID" value="ABP51245.1"/>
    <property type="molecule type" value="Genomic_DNA"/>
</dbReference>
<dbReference type="SMR" id="A4WLH8"/>
<dbReference type="STRING" id="340102.Pars_1694"/>
<dbReference type="KEGG" id="pas:Pars_1694"/>
<dbReference type="HOGENOM" id="CLU_128576_0_0_2"/>
<dbReference type="OrthoDB" id="7000at2157"/>
<dbReference type="PhylomeDB" id="A4WLH8"/>
<dbReference type="Proteomes" id="UP000001567">
    <property type="component" value="Chromosome"/>
</dbReference>
<dbReference type="GO" id="GO:0009347">
    <property type="term" value="C:aspartate carbamoyltransferase complex"/>
    <property type="evidence" value="ECO:0007669"/>
    <property type="project" value="InterPro"/>
</dbReference>
<dbReference type="GO" id="GO:0046872">
    <property type="term" value="F:metal ion binding"/>
    <property type="evidence" value="ECO:0007669"/>
    <property type="project" value="UniProtKB-KW"/>
</dbReference>
<dbReference type="GO" id="GO:0006207">
    <property type="term" value="P:'de novo' pyrimidine nucleobase biosynthetic process"/>
    <property type="evidence" value="ECO:0007669"/>
    <property type="project" value="InterPro"/>
</dbReference>
<dbReference type="GO" id="GO:0006221">
    <property type="term" value="P:pyrimidine nucleotide biosynthetic process"/>
    <property type="evidence" value="ECO:0007669"/>
    <property type="project" value="UniProtKB-UniRule"/>
</dbReference>
<dbReference type="Gene3D" id="2.30.30.20">
    <property type="entry name" value="Aspartate carbamoyltransferase regulatory subunit, C-terminal domain"/>
    <property type="match status" value="1"/>
</dbReference>
<dbReference type="Gene3D" id="3.30.70.140">
    <property type="entry name" value="Aspartate carbamoyltransferase regulatory subunit, N-terminal domain"/>
    <property type="match status" value="1"/>
</dbReference>
<dbReference type="HAMAP" id="MF_00002">
    <property type="entry name" value="Asp_carb_tr_reg"/>
    <property type="match status" value="1"/>
</dbReference>
<dbReference type="InterPro" id="IPR020545">
    <property type="entry name" value="Asp_carbamoyltransf_reg_N"/>
</dbReference>
<dbReference type="InterPro" id="IPR002801">
    <property type="entry name" value="Asp_carbamoylTrfase_reg"/>
</dbReference>
<dbReference type="InterPro" id="IPR020542">
    <property type="entry name" value="Asp_carbamoyltrfase_reg_C"/>
</dbReference>
<dbReference type="InterPro" id="IPR036792">
    <property type="entry name" value="Asp_carbatrfase_reg_C_sf"/>
</dbReference>
<dbReference type="InterPro" id="IPR036793">
    <property type="entry name" value="Asp_carbatrfase_reg_N_sf"/>
</dbReference>
<dbReference type="NCBIfam" id="TIGR00240">
    <property type="entry name" value="ATCase_reg"/>
    <property type="match status" value="1"/>
</dbReference>
<dbReference type="PANTHER" id="PTHR35805">
    <property type="entry name" value="ASPARTATE CARBAMOYLTRANSFERASE REGULATORY CHAIN"/>
    <property type="match status" value="1"/>
</dbReference>
<dbReference type="PANTHER" id="PTHR35805:SF1">
    <property type="entry name" value="ASPARTATE CARBAMOYLTRANSFERASE REGULATORY CHAIN"/>
    <property type="match status" value="1"/>
</dbReference>
<dbReference type="Pfam" id="PF01948">
    <property type="entry name" value="PyrI"/>
    <property type="match status" value="1"/>
</dbReference>
<dbReference type="Pfam" id="PF02748">
    <property type="entry name" value="PyrI_C"/>
    <property type="match status" value="1"/>
</dbReference>
<dbReference type="SUPFAM" id="SSF57825">
    <property type="entry name" value="Aspartate carbamoyltransferase, Regulatory-chain, C-terminal domain"/>
    <property type="match status" value="1"/>
</dbReference>
<dbReference type="SUPFAM" id="SSF54893">
    <property type="entry name" value="Aspartate carbamoyltransferase, Regulatory-chain, N-terminal domain"/>
    <property type="match status" value="1"/>
</dbReference>
<feature type="chain" id="PRO_1000000045" description="Aspartate carbamoyltransferase regulatory chain">
    <location>
        <begin position="1"/>
        <end position="151"/>
    </location>
</feature>
<feature type="binding site" evidence="1">
    <location>
        <position position="108"/>
    </location>
    <ligand>
        <name>Zn(2+)</name>
        <dbReference type="ChEBI" id="CHEBI:29105"/>
    </ligand>
</feature>
<feature type="binding site" evidence="1">
    <location>
        <position position="113"/>
    </location>
    <ligand>
        <name>Zn(2+)</name>
        <dbReference type="ChEBI" id="CHEBI:29105"/>
    </ligand>
</feature>
<feature type="binding site" evidence="1">
    <location>
        <position position="138"/>
    </location>
    <ligand>
        <name>Zn(2+)</name>
        <dbReference type="ChEBI" id="CHEBI:29105"/>
    </ligand>
</feature>
<feature type="binding site" evidence="1">
    <location>
        <position position="141"/>
    </location>
    <ligand>
        <name>Zn(2+)</name>
        <dbReference type="ChEBI" id="CHEBI:29105"/>
    </ligand>
</feature>
<reference key="1">
    <citation type="submission" date="2007-04" db="EMBL/GenBank/DDBJ databases">
        <title>Complete sequence of Pyrobaculum arsenaticum DSM 13514.</title>
        <authorList>
            <consortium name="US DOE Joint Genome Institute"/>
            <person name="Copeland A."/>
            <person name="Lucas S."/>
            <person name="Lapidus A."/>
            <person name="Barry K."/>
            <person name="Glavina del Rio T."/>
            <person name="Dalin E."/>
            <person name="Tice H."/>
            <person name="Pitluck S."/>
            <person name="Chain P."/>
            <person name="Malfatti S."/>
            <person name="Shin M."/>
            <person name="Vergez L."/>
            <person name="Schmutz J."/>
            <person name="Larimer F."/>
            <person name="Land M."/>
            <person name="Hauser L."/>
            <person name="Kyrpides N."/>
            <person name="Mikhailova N."/>
            <person name="Cozen A.E."/>
            <person name="Fitz-Gibbon S.T."/>
            <person name="House C.H."/>
            <person name="Saltikov C."/>
            <person name="Lowe T.M."/>
            <person name="Richardson P."/>
        </authorList>
    </citation>
    <scope>NUCLEOTIDE SEQUENCE [LARGE SCALE GENOMIC DNA]</scope>
    <source>
        <strain>ATCC 700994 / DSM 13514 / JCM 11321 / PZ6</strain>
    </source>
</reference>
<evidence type="ECO:0000255" key="1">
    <source>
        <dbReference type="HAMAP-Rule" id="MF_00002"/>
    </source>
</evidence>
<protein>
    <recommendedName>
        <fullName evidence="1">Aspartate carbamoyltransferase regulatory chain</fullName>
    </recommendedName>
</protein>
<accession>A4WLH8</accession>